<organism>
    <name type="scientific">Human immunodeficiency virus type 1 group M subtype B (isolate HXB2)</name>
    <name type="common">HIV-1</name>
    <dbReference type="NCBI Taxonomy" id="11706"/>
    <lineage>
        <taxon>Viruses</taxon>
        <taxon>Riboviria</taxon>
        <taxon>Pararnavirae</taxon>
        <taxon>Artverviricota</taxon>
        <taxon>Revtraviricetes</taxon>
        <taxon>Ortervirales</taxon>
        <taxon>Retroviridae</taxon>
        <taxon>Orthoretrovirinae</taxon>
        <taxon>Lentivirus</taxon>
        <taxon>Human immunodeficiency virus type 1</taxon>
    </lineage>
</organism>
<sequence length="82" mass="9242">MQPIPIVAIVALVVAIIIAIVVWSIVIIEYRKILRQRKIDRLIDRLIERAEDSGNESEGEISALVEMGVEMGHHAPWDVDDL</sequence>
<dbReference type="EMBL" id="K03455">
    <property type="status" value="NOT_ANNOTATED_CDS"/>
    <property type="molecule type" value="Genomic_RNA"/>
</dbReference>
<dbReference type="EMBL" id="AF033819">
    <property type="protein sequence ID" value="AAD20388.1"/>
    <property type="molecule type" value="Genomic_RNA"/>
</dbReference>
<dbReference type="RefSeq" id="NP_057855.1">
    <property type="nucleotide sequence ID" value="NC_001802.1"/>
</dbReference>
<dbReference type="PDB" id="2N29">
    <property type="method" value="NMR"/>
    <property type="chains" value="A=29-82"/>
</dbReference>
<dbReference type="PDBsum" id="2N29"/>
<dbReference type="BMRB" id="P05919"/>
<dbReference type="SMR" id="P05919"/>
<dbReference type="IntAct" id="P05919">
    <property type="interactions" value="55"/>
</dbReference>
<dbReference type="TCDB" id="1.A.40.1.1">
    <property type="family name" value="the human immunodeficiency virus type i, hiv-1 (retrovirdiac) vpu channel (vpu-c) family"/>
</dbReference>
<dbReference type="iPTMnet" id="P05919"/>
<dbReference type="GeneID" id="155945"/>
<dbReference type="KEGG" id="vg:155945"/>
<dbReference type="Reactome" id="R-HSA-162585">
    <property type="pathway name" value="Uncoating of the HIV Virion"/>
</dbReference>
<dbReference type="Reactome" id="R-HSA-162588">
    <property type="pathway name" value="Budding and maturation of HIV virion"/>
</dbReference>
<dbReference type="Reactome" id="R-HSA-162592">
    <property type="pathway name" value="Integration of provirus"/>
</dbReference>
<dbReference type="Reactome" id="R-HSA-162594">
    <property type="pathway name" value="Early Phase of HIV Life Cycle"/>
</dbReference>
<dbReference type="Reactome" id="R-HSA-164516">
    <property type="pathway name" value="Minus-strand DNA synthesis"/>
</dbReference>
<dbReference type="Reactome" id="R-HSA-164525">
    <property type="pathway name" value="Plus-strand DNA synthesis"/>
</dbReference>
<dbReference type="Reactome" id="R-HSA-164843">
    <property type="pathway name" value="2-LTR circle formation"/>
</dbReference>
<dbReference type="Reactome" id="R-HSA-171286">
    <property type="pathway name" value="Synthesis and processing of ENV and VPU"/>
</dbReference>
<dbReference type="Reactome" id="R-HSA-173107">
    <property type="pathway name" value="Binding and entry of HIV virion"/>
</dbReference>
<dbReference type="Reactome" id="R-HSA-175474">
    <property type="pathway name" value="Assembly Of The HIV Virion"/>
</dbReference>
<dbReference type="Reactome" id="R-HSA-175567">
    <property type="pathway name" value="Integration of viral DNA into host genomic DNA"/>
</dbReference>
<dbReference type="Reactome" id="R-HSA-177539">
    <property type="pathway name" value="Autointegration results in viral DNA circles"/>
</dbReference>
<dbReference type="Reactome" id="R-HSA-180534">
    <property type="pathway name" value="Vpu mediated degradation of CD4"/>
</dbReference>
<dbReference type="Reactome" id="R-HSA-180689">
    <property type="pathway name" value="APOBEC3G mediated resistance to HIV-1 infection"/>
</dbReference>
<dbReference type="Reactome" id="R-HSA-180910">
    <property type="pathway name" value="Vpr-mediated nuclear import of PICs"/>
</dbReference>
<dbReference type="EvolutionaryTrace" id="P05919"/>
<dbReference type="Proteomes" id="UP000002241">
    <property type="component" value="Segment"/>
</dbReference>
<dbReference type="Proteomes" id="UP000105453">
    <property type="component" value="Segment"/>
</dbReference>
<dbReference type="GO" id="GO:0033644">
    <property type="term" value="C:host cell membrane"/>
    <property type="evidence" value="ECO:0007669"/>
    <property type="project" value="UniProtKB-SubCell"/>
</dbReference>
<dbReference type="GO" id="GO:0016020">
    <property type="term" value="C:membrane"/>
    <property type="evidence" value="ECO:0007669"/>
    <property type="project" value="UniProtKB-UniRule"/>
</dbReference>
<dbReference type="GO" id="GO:0042609">
    <property type="term" value="F:CD4 receptor binding"/>
    <property type="evidence" value="ECO:0007669"/>
    <property type="project" value="UniProtKB-UniRule"/>
</dbReference>
<dbReference type="GO" id="GO:0005261">
    <property type="term" value="F:monoatomic cation channel activity"/>
    <property type="evidence" value="ECO:0007669"/>
    <property type="project" value="UniProtKB-UniRule"/>
</dbReference>
<dbReference type="GO" id="GO:0032801">
    <property type="term" value="P:receptor catabolic process"/>
    <property type="evidence" value="ECO:0007669"/>
    <property type="project" value="UniProtKB-UniRule"/>
</dbReference>
<dbReference type="GO" id="GO:0052170">
    <property type="term" value="P:symbiont-mediated suppression of host innate immune response"/>
    <property type="evidence" value="ECO:0007669"/>
    <property type="project" value="UniProtKB-KW"/>
</dbReference>
<dbReference type="GO" id="GO:0039502">
    <property type="term" value="P:symbiont-mediated suppression of host type I interferon-mediated signaling pathway"/>
    <property type="evidence" value="ECO:0007669"/>
    <property type="project" value="UniProtKB-UniRule"/>
</dbReference>
<dbReference type="GO" id="GO:0039587">
    <property type="term" value="P:symbiont-mediated-mediated suppression of host tetherin activity"/>
    <property type="evidence" value="ECO:0007669"/>
    <property type="project" value="UniProtKB-UniRule"/>
</dbReference>
<dbReference type="GO" id="GO:0019076">
    <property type="term" value="P:viral release from host cell"/>
    <property type="evidence" value="ECO:0007669"/>
    <property type="project" value="UniProtKB-UniRule"/>
</dbReference>
<dbReference type="Gene3D" id="1.10.195.10">
    <property type="entry name" value="HIV-1 VPU cytoplasmic domain"/>
    <property type="match status" value="1"/>
</dbReference>
<dbReference type="HAMAP" id="MF_04082">
    <property type="entry name" value="HIV_VPU"/>
    <property type="match status" value="1"/>
</dbReference>
<dbReference type="InterPro" id="IPR008187">
    <property type="entry name" value="Vpu"/>
</dbReference>
<dbReference type="InterPro" id="IPR009032">
    <property type="entry name" value="Vpu_cyt_dom_sf"/>
</dbReference>
<dbReference type="Pfam" id="PF00558">
    <property type="entry name" value="Vpu"/>
    <property type="match status" value="1"/>
</dbReference>
<dbReference type="SUPFAM" id="SSF57647">
    <property type="entry name" value="HIV-1 VPU cytoplasmic domain"/>
    <property type="match status" value="1"/>
</dbReference>
<reference key="1">
    <citation type="journal article" date="1987" name="AIDS Res. Hum. Retroviruses">
        <title>Complete nucleotide sequences of functional clones of the AIDS virus.</title>
        <authorList>
            <person name="Ratner L."/>
            <person name="Fisher A."/>
            <person name="Jagodzinski L.L."/>
            <person name="Mitsuya H."/>
            <person name="Liou R.-S."/>
            <person name="Gallo R.C."/>
            <person name="Wong-Staal F."/>
        </authorList>
    </citation>
    <scope>NUCLEOTIDE SEQUENCE [GENOMIC RNA]</scope>
</reference>
<reference key="2">
    <citation type="submission" date="1999-03" db="EMBL/GenBank/DDBJ databases">
        <authorList>
            <person name="Chappey C."/>
        </authorList>
    </citation>
    <scope>NUCLEOTIDE SEQUENCE [LARGE SCALE GENOMIC DNA]</scope>
</reference>
<reference key="3">
    <citation type="journal article" date="1993" name="J. Virol.">
        <title>Human immunodeficiency virus type 1 Vpu protein is an oligomeric type I integral membrane protein.</title>
        <authorList>
            <person name="Maldarelli F."/>
            <person name="Chen M.Y."/>
            <person name="Willey R.L."/>
            <person name="Strebel K."/>
        </authorList>
    </citation>
    <scope>TOPOLOGY</scope>
    <scope>SUBUNIT</scope>
    <scope>SUBCELLULAR LOCATION</scope>
</reference>
<reference key="4">
    <citation type="journal article" date="1994" name="J. Mol. Biol.">
        <title>The human immunodeficiency virus type 1 encoded Vpu protein is phosphorylated by casein kinase-2 (CK-2) at positions Ser52 and Ser56 within a predicted alpha-helix-turn-alpha-helix-motif.</title>
        <authorList>
            <person name="Schubert U."/>
            <person name="Henklein P."/>
            <person name="Boldyreff B."/>
            <person name="Wingender E."/>
            <person name="Strebel K."/>
            <person name="Porstmann T."/>
        </authorList>
    </citation>
    <scope>PHOSPHORYLATION AT SER-53 AND SER-57</scope>
</reference>
<reference key="5">
    <citation type="journal article" date="1995" name="J. Virol.">
        <title>The human immunodeficiency virus type 1 Vpu protein specifically binds to the cytoplasmic domain of CD4: implications for the mechanism of degradation.</title>
        <authorList>
            <person name="Bour S."/>
            <person name="Schubert U."/>
            <person name="Strebel K."/>
        </authorList>
    </citation>
    <scope>INTERACTION WITH HOST CD4</scope>
</reference>
<reference key="6">
    <citation type="journal article" date="1996" name="J. Virol.">
        <title>The Vpu protein of human immunodeficiency virus type 1 forms cation-selective ion channels.</title>
        <authorList>
            <person name="Ewart G.D."/>
            <person name="Sutherland T."/>
            <person name="Gage P.W."/>
            <person name="Cox G.B."/>
        </authorList>
    </citation>
    <scope>FUNCTION</scope>
</reference>
<reference key="7">
    <citation type="journal article" date="1998" name="Mol. Cell">
        <title>A novel human WD protein, h-beta TrCp, that interacts with HIV-1 Vpu connects CD4 to the ER degradation pathway through an F-box motif.</title>
        <authorList>
            <person name="Margottin F."/>
            <person name="Bour S.P."/>
            <person name="Durand H."/>
            <person name="Selig L."/>
            <person name="Benichou S."/>
            <person name="Richard V."/>
            <person name="Thomas D."/>
            <person name="Strebel K."/>
            <person name="Benarous R."/>
        </authorList>
    </citation>
    <scope>INTERACTION WITH HOST BTRC</scope>
</reference>
<reference key="8">
    <citation type="journal article" date="2001" name="J. Exp. Med.">
        <title>The human immunodeficiency virus type 1 accessory protein Vpu induces apoptosis by suppressing the nuclear factor kappaB-dependent expression of antiapoptotic factors.</title>
        <authorList>
            <person name="Akari H."/>
            <person name="Bour S."/>
            <person name="Kao S."/>
            <person name="Adachi A."/>
            <person name="Strebel K."/>
        </authorList>
    </citation>
    <scope>FUNCTION</scope>
</reference>
<reference key="9">
    <citation type="journal article" date="2009" name="PLoS Pathog.">
        <title>HIV-1 Vpu neutralizes the antiviral factor Tetherin/BST-2 by binding it and directing its beta-TrCP2-dependent degradation.</title>
        <authorList>
            <person name="Mangeat B."/>
            <person name="Gers-Huber G."/>
            <person name="Lehmann M."/>
            <person name="Zufferey M."/>
            <person name="Luban J."/>
            <person name="Piguet V."/>
        </authorList>
    </citation>
    <scope>FUNCTION</scope>
    <scope>INTERACTION WITH HOST FBXW11</scope>
</reference>
<reference key="10">
    <citation type="journal article" date="2009" name="J. Biol. Chem.">
        <title>HIV-1 accessory protein Vpu internalizes cell-surface BST-2/tetherin through transmembrane interactions leading to lysosomes.</title>
        <authorList>
            <person name="Iwabu Y."/>
            <person name="Fujita H."/>
            <person name="Kinomoto M."/>
            <person name="Kaneko K."/>
            <person name="Ishizaka Y."/>
            <person name="Tanaka Y."/>
            <person name="Sata T."/>
            <person name="Tokunaga K."/>
        </authorList>
    </citation>
    <scope>FUNCTION</scope>
    <scope>INTERACTION WITH HOST BST2</scope>
</reference>
<reference key="11">
    <citation type="journal article" date="2013" name="PLoS ONE">
        <title>Molecular dynamics simulations reveal the HIV-1 Vpu transmembrane protein to form stable pentamers.</title>
        <authorList>
            <person name="Padhi S."/>
            <person name="Khan N."/>
            <person name="Jameel S."/>
            <person name="Priyakumar U.D."/>
        </authorList>
    </citation>
    <scope>SUBUNIT</scope>
</reference>
<reference key="12">
    <citation type="journal article" date="2014" name="Front. Microbiol.">
        <title>Mechanisms underlying HIV-1 Vpu-mediated viral egress.</title>
        <authorList>
            <person name="Roy N."/>
            <person name="Pacini G."/>
            <person name="Berlioz-Torrent C."/>
            <person name="Janvier K."/>
        </authorList>
    </citation>
    <scope>REVIEW</scope>
</reference>
<reference key="13">
    <citation type="journal article" date="2014" name="Elife">
        <title>Structural basis of HIV-1 Vpu-mediated BST2 antagonism via hijacking of the clathrin adaptor protein complex 1.</title>
        <authorList>
            <person name="Jia X."/>
            <person name="Weber E."/>
            <person name="Tokarev A."/>
            <person name="Lewinski M."/>
            <person name="Rizk M."/>
            <person name="Suarez M."/>
            <person name="Guatelli J."/>
            <person name="Xiong Y."/>
        </authorList>
    </citation>
    <scope>FUNCTION</scope>
    <scope>INTERACTION WITH HOST AP1M1</scope>
</reference>
<reference key="14">
    <citation type="journal article" date="2014" name="Retrovirology">
        <title>HIV Nef and Vpu protect HIV-infected CD4+ T cells from antibody-mediated cell lysis through down-modulation of CD4 and BST2.</title>
        <authorList>
            <person name="Pham T.N."/>
            <person name="Lukhele S."/>
            <person name="Hajjar F."/>
            <person name="Routy J.P."/>
            <person name="Cohen E.A."/>
        </authorList>
    </citation>
    <scope>FUNCTION</scope>
</reference>
<reference key="15">
    <citation type="journal article" date="2020" name="Nat. Microbiol.">
        <title>Vpu modulates DNA repair to suppress innate sensing and hyper-integration of HIV-1.</title>
        <authorList>
            <person name="Volcic M."/>
            <person name="Sparrer K.M.J."/>
            <person name="Koepke L."/>
            <person name="Hotter D."/>
            <person name="Sauter D."/>
            <person name="Stuerzel C.M."/>
            <person name="Scherer M."/>
            <person name="Stamminger T."/>
            <person name="Hofmann T.G."/>
            <person name="Arhel N.J."/>
            <person name="Wiesmueller L."/>
            <person name="Kirchhoff F."/>
        </authorList>
    </citation>
    <scope>FUNCTION</scope>
    <scope>INTERACTION WITH HOST RANBP2</scope>
</reference>
<reference key="16">
    <citation type="journal article" date="2023" name="J. Struct. Biol.">
        <title>Insights into the oligomeric structure of the HIV-1 Vpu protein.</title>
        <authorList>
            <person name="Majeed S."/>
            <person name="Adetuyi O."/>
            <person name="Borbat P.P."/>
            <person name="Majharul Islam M."/>
            <person name="Ishola O."/>
            <person name="Zhao B."/>
            <person name="Georgieva E.R."/>
        </authorList>
    </citation>
    <scope>SUBUNIT</scope>
</reference>
<reference evidence="16" key="17">
    <citation type="journal article" date="2015" name="Biochim. Biophys. Acta">
        <title>Structural determination of virus protein U from HIV-1 by NMR in membrane environments.</title>
        <authorList>
            <person name="Zhang H."/>
            <person name="Lin E.C."/>
            <person name="Das B.B."/>
            <person name="Tian Y."/>
            <person name="Opella S.J."/>
        </authorList>
    </citation>
    <scope>STRUCTURE BY NMR OF 29-82</scope>
    <scope>DOMAIN</scope>
</reference>
<organismHost>
    <name type="scientific">Homo sapiens</name>
    <name type="common">Human</name>
    <dbReference type="NCBI Taxonomy" id="9606"/>
</organismHost>
<protein>
    <recommendedName>
        <fullName evidence="1">Protein Vpu</fullName>
    </recommendedName>
    <alternativeName>
        <fullName evidence="1">U ORF protein</fullName>
    </alternativeName>
    <alternativeName>
        <fullName evidence="1">Viral protein U</fullName>
    </alternativeName>
</protein>
<comment type="function">
    <text evidence="1 2 3 4 6 7 9 14">Enhances virion budding by targeting host CD4 and Tetherin/BST2 to proteasome degradation. Degradation of CD4 prevents any unwanted premature interactions between viral Env and its host receptor CD4 in the endoplasmic reticulum. Degradation of antiretroviral protein Tetherin/BST2 is important for virion budding, as BST2 tethers new viral particles to the host cell membrane. Mechanistically, Vpu bridges either CD4 or BST2 to BTRC, a substrate recognition subunit of the Skp1/Cullin/F-box protein E3 ubiquitin ligase, induces their ubiquitination and subsequent proteasomal degradation. The alteration of the E3 ligase specificity by Vpu seems to promote the degradation of host IKBKB, leading to NF-kappa-B down-regulation and subsequent apoptosis. Acts as a viroporin that forms an oligomeric ion channel in membranes. Modulates the host DNA repair mechanisms to promote degradation of nuclear viral cDNA in cells that are already productively infected in order to suppress immune sensing and proviral hyper-integration (superinfection). Manipulates PML-NBs and modulates SUMOylation of host BLM protein thereby enhancing its DNA-end processing activity toward viral unintegrated linear DNA. Also inhibits RAD52-mediated homologous repair of viral cDNA, preventing the generation of dead-end circular forms of single copies of the long terminal repeat and permitting sustained nucleolytic attack.</text>
</comment>
<comment type="activity regulation">
    <text evidence="1">Ion channel activity is inhibited by hexamethylene amiloride in vitro.</text>
</comment>
<comment type="subunit">
    <text evidence="1 3 4 5 7 9 10 11 13 15">Homopentamer (PubMed:36796461). Interacts with host CD4 and BRTC; these interactions induce proteasomal degradation of CD4. Interacts (via transmembrane region) with host BST2 (via transmembrane region); this interaction leads to the degradation of host BST2. Interacts with host FBXW11. Interacts with host AP1M1; this interaction plays a role in the mistrafficking and subsequent degradation of host BST2. Interacts with host RANBP2; this interaction allows Vpu to down-regulate host BLM sumoylation.</text>
</comment>
<comment type="interaction">
    <interactant intactId="EBI-6164626">
        <id>P05919</id>
    </interactant>
    <interactant intactId="EBI-353826">
        <id>P01730</id>
        <label>CD4</label>
    </interactant>
    <organismsDiffer>true</organismsDiffer>
    <experiments>3</experiments>
</comment>
<comment type="subcellular location">
    <subcellularLocation>
        <location evidence="1">Host membrane</location>
        <topology evidence="1 13">Single-pass type I membrane protein</topology>
    </subcellularLocation>
</comment>
<comment type="domain">
    <text evidence="1 8">The N-terminus and transmembrane domains are required for self-oligomerization and proper virion budding, whereas the cytoplasmic domain is required for CD4 degradation. The cytoplasmic domain is composed of 2 amphipathic alpha helix that form a U-shape.</text>
</comment>
<comment type="PTM">
    <text evidence="1">Phosphorylated by host CK2. This phosphorylation is necessary for interaction with human BTRC and degradation of CD4.</text>
</comment>
<comment type="miscellaneous">
    <text evidence="1">HIV-1 lineages are divided in three main groups, M (for Major), O (for Outlier), and N (for New, or Non-M, Non-O). The vast majority of strains found worldwide belong to the group M. Group O seems to be endemic to and largely confined to Cameroon and neighboring countries in West Central Africa, where these viruses represent a small minority of HIV-1 strains. The group N is represented by a limited number of isolates from Cameroonian persons. The group M is further subdivided in 9 clades or subtypes (A to D, F to H, J and K).</text>
</comment>
<comment type="similarity">
    <text evidence="1">Belongs to the HIV-1 VPU protein family.</text>
</comment>
<accession>P05919</accession>
<accession>Q9WB91</accession>
<gene>
    <name evidence="1" type="primary">vpu</name>
</gene>
<feature type="chain" id="PRO_0000085433" description="Protein Vpu">
    <location>
        <begin position="1"/>
        <end position="82"/>
    </location>
</feature>
<feature type="topological domain" description="Extracellular" evidence="1">
    <location>
        <begin position="1"/>
        <end position="7"/>
    </location>
</feature>
<feature type="transmembrane region" description="Helical" evidence="1">
    <location>
        <begin position="8"/>
        <end position="28"/>
    </location>
</feature>
<feature type="topological domain" description="Cytoplasmic" evidence="1">
    <location>
        <begin position="29"/>
        <end position="82"/>
    </location>
</feature>
<feature type="modified residue" description="Phosphoserine; by host CK2" evidence="1 12">
    <location>
        <position position="53"/>
    </location>
</feature>
<feature type="modified residue" description="Phosphoserine; by host CK2" evidence="1 12">
    <location>
        <position position="57"/>
    </location>
</feature>
<feature type="helix" evidence="17">
    <location>
        <begin position="37"/>
        <end position="41"/>
    </location>
</feature>
<feature type="helix" evidence="17">
    <location>
        <begin position="42"/>
        <end position="51"/>
    </location>
</feature>
<feature type="helix" evidence="17">
    <location>
        <begin position="58"/>
        <end position="70"/>
    </location>
</feature>
<feature type="turn" evidence="17">
    <location>
        <begin position="74"/>
        <end position="77"/>
    </location>
</feature>
<feature type="strand" evidence="17">
    <location>
        <begin position="78"/>
        <end position="80"/>
    </location>
</feature>
<keyword id="KW-0002">3D-structure</keyword>
<keyword id="KW-0014">AIDS</keyword>
<keyword id="KW-0053">Apoptosis</keyword>
<keyword id="KW-1043">Host membrane</keyword>
<keyword id="KW-0945">Host-virus interaction</keyword>
<keyword id="KW-1090">Inhibition of host innate immune response by virus</keyword>
<keyword id="KW-1084">Inhibition of host tetherin by virus</keyword>
<keyword id="KW-0407">Ion channel</keyword>
<keyword id="KW-0406">Ion transport</keyword>
<keyword id="KW-0472">Membrane</keyword>
<keyword id="KW-0597">Phosphoprotein</keyword>
<keyword id="KW-1185">Reference proteome</keyword>
<keyword id="KW-0812">Transmembrane</keyword>
<keyword id="KW-1133">Transmembrane helix</keyword>
<keyword id="KW-0813">Transport</keyword>
<keyword id="KW-0899">Viral immunoevasion</keyword>
<proteinExistence type="evidence at protein level"/>
<name>VPU_HV1H2</name>
<evidence type="ECO:0000255" key="1">
    <source>
        <dbReference type="HAMAP-Rule" id="MF_04082"/>
    </source>
</evidence>
<evidence type="ECO:0000269" key="2">
    <source>
    </source>
</evidence>
<evidence type="ECO:0000269" key="3">
    <source>
    </source>
</evidence>
<evidence type="ECO:0000269" key="4">
    <source>
    </source>
</evidence>
<evidence type="ECO:0000269" key="5">
    <source>
    </source>
</evidence>
<evidence type="ECO:0000269" key="6">
    <source>
    </source>
</evidence>
<evidence type="ECO:0000269" key="7">
    <source>
    </source>
</evidence>
<evidence type="ECO:0000269" key="8">
    <source>
    </source>
</evidence>
<evidence type="ECO:0000269" key="9">
    <source>
    </source>
</evidence>
<evidence type="ECO:0000269" key="10">
    <source>
    </source>
</evidence>
<evidence type="ECO:0000269" key="11">
    <source>
    </source>
</evidence>
<evidence type="ECO:0000269" key="12">
    <source>
    </source>
</evidence>
<evidence type="ECO:0000269" key="13">
    <source>
    </source>
</evidence>
<evidence type="ECO:0000269" key="14">
    <source>
    </source>
</evidence>
<evidence type="ECO:0000269" key="15">
    <source>
    </source>
</evidence>
<evidence type="ECO:0007744" key="16">
    <source>
        <dbReference type="PDB" id="2N29"/>
    </source>
</evidence>
<evidence type="ECO:0007829" key="17">
    <source>
        <dbReference type="PDB" id="2N29"/>
    </source>
</evidence>